<protein>
    <recommendedName>
        <fullName evidence="1">AimR transcriptional regulator</fullName>
    </recommendedName>
    <alternativeName>
        <fullName evidence="1">Arbitrium communication peptide receptor</fullName>
    </alternativeName>
    <alternativeName>
        <fullName>YopK protein</fullName>
    </alternativeName>
</protein>
<sequence length="386" mass="45320">MELIRIAMKKDLENDNSLMNKWATVAGLKNPNPLYDFLNHDGKTFNEFSSIVNIVKSQYPDREYELMKDYCLNLDVKTKAARSALEYADANMFFEIEDVLIDSMISCSNMKSKEYGKVYKIHRELSNSVITEFEAVKRLGKLNIKTPEMNSFSRLLLLYHYLSTGNFSPMAQLIKQIDLSEISENMYIRNTYQTRVHVLMSNIKLNENSLEECREYSKKALESTNILRFQVFSYLTIGNSLLFSNYELAQENFLKGLSISVQNENYNMIFQQALCFLNNVWRKENKWINFESDSIMDLQEQAHCFINFNENSKAKEVLDKLDLLVHNDNELAMHYYLKGRLEQNKACFYSSIEYFKKSNDKFLIRLPLLELQKMGENQKLLELLLL</sequence>
<proteinExistence type="evidence at protein level"/>
<comment type="function">
    <text evidence="1">Transcriptional regulator which is part of the latency-replication switch system that decides at the onset of infection whether to replicate and lyse the host or to lysogenize (latency) and keep the host viable. Activates the transcription of the aimX locus. Transcriptional activation of aimX seems to lead to the productive viral replication (lytic cycle), aimX possibly acting as a regulatory non-coding RNA.</text>
</comment>
<comment type="subunit">
    <text evidence="1">Homodimer. Interacts with the viral arbitrium peptide, this interaction changes the oligomeric state of AimR from an active dimer to an inactive monomer leading to lysogeny.</text>
</comment>
<organismHost>
    <name type="scientific">Bacillus pumilus</name>
    <name type="common">Bacillus mesentericus</name>
    <dbReference type="NCBI Taxonomy" id="1408"/>
</organismHost>
<organismHost>
    <name type="scientific">Bacillus subtilis</name>
    <dbReference type="NCBI Taxonomy" id="1423"/>
</organismHost>
<evidence type="ECO:0000250" key="1">
    <source>
        <dbReference type="UniProtKB" id="P0DOE3"/>
    </source>
</evidence>
<evidence type="ECO:0007829" key="2">
    <source>
        <dbReference type="PDB" id="5Y24"/>
    </source>
</evidence>
<evidence type="ECO:0007829" key="3">
    <source>
        <dbReference type="PDB" id="6IM4"/>
    </source>
</evidence>
<keyword id="KW-0002">3D-structure</keyword>
<keyword id="KW-0010">Activator</keyword>
<keyword id="KW-1252">Latency-replication decision</keyword>
<keyword id="KW-1185">Reference proteome</keyword>
<keyword id="KW-0804">Transcription</keyword>
<keyword id="KW-0805">Transcription regulation</keyword>
<gene>
    <name evidence="1" type="primary">aimR</name>
    <name type="synonym">yopK</name>
</gene>
<feature type="chain" id="PRO_0000439257" description="AimR transcriptional regulator">
    <location>
        <begin position="1"/>
        <end position="386"/>
    </location>
</feature>
<feature type="helix" evidence="3">
    <location>
        <begin position="3"/>
        <end position="14"/>
    </location>
</feature>
<feature type="helix" evidence="3">
    <location>
        <begin position="18"/>
        <end position="25"/>
    </location>
</feature>
<feature type="strand" evidence="3">
    <location>
        <begin position="29"/>
        <end position="31"/>
    </location>
</feature>
<feature type="helix" evidence="3">
    <location>
        <begin position="32"/>
        <end position="39"/>
    </location>
</feature>
<feature type="helix" evidence="2">
    <location>
        <begin position="49"/>
        <end position="58"/>
    </location>
</feature>
<feature type="helix" evidence="2">
    <location>
        <begin position="60"/>
        <end position="62"/>
    </location>
</feature>
<feature type="helix" evidence="2">
    <location>
        <begin position="63"/>
        <end position="72"/>
    </location>
</feature>
<feature type="helix" evidence="2">
    <location>
        <begin position="79"/>
        <end position="90"/>
    </location>
</feature>
<feature type="helix" evidence="2">
    <location>
        <begin position="94"/>
        <end position="106"/>
    </location>
</feature>
<feature type="helix" evidence="2">
    <location>
        <begin position="110"/>
        <end position="126"/>
    </location>
</feature>
<feature type="helix" evidence="2">
    <location>
        <begin position="132"/>
        <end position="142"/>
    </location>
</feature>
<feature type="helix" evidence="2">
    <location>
        <begin position="147"/>
        <end position="163"/>
    </location>
</feature>
<feature type="helix" evidence="2">
    <location>
        <begin position="170"/>
        <end position="175"/>
    </location>
</feature>
<feature type="helix" evidence="2">
    <location>
        <begin position="179"/>
        <end position="181"/>
    </location>
</feature>
<feature type="helix" evidence="2">
    <location>
        <begin position="186"/>
        <end position="206"/>
    </location>
</feature>
<feature type="helix" evidence="2">
    <location>
        <begin position="210"/>
        <end position="222"/>
    </location>
</feature>
<feature type="helix" evidence="2">
    <location>
        <begin position="227"/>
        <end position="240"/>
    </location>
</feature>
<feature type="turn" evidence="2">
    <location>
        <begin position="241"/>
        <end position="244"/>
    </location>
</feature>
<feature type="helix" evidence="2">
    <location>
        <begin position="246"/>
        <end position="260"/>
    </location>
</feature>
<feature type="helix" evidence="2">
    <location>
        <begin position="264"/>
        <end position="280"/>
    </location>
</feature>
<feature type="helix" evidence="2">
    <location>
        <begin position="295"/>
        <end position="307"/>
    </location>
</feature>
<feature type="helix" evidence="2">
    <location>
        <begin position="311"/>
        <end position="321"/>
    </location>
</feature>
<feature type="helix" evidence="2">
    <location>
        <begin position="328"/>
        <end position="342"/>
    </location>
</feature>
<feature type="helix" evidence="2">
    <location>
        <begin position="345"/>
        <end position="358"/>
    </location>
</feature>
<feature type="turn" evidence="2">
    <location>
        <begin position="361"/>
        <end position="364"/>
    </location>
</feature>
<feature type="helix" evidence="2">
    <location>
        <begin position="365"/>
        <end position="373"/>
    </location>
</feature>
<feature type="helix" evidence="2">
    <location>
        <begin position="378"/>
        <end position="386"/>
    </location>
</feature>
<accession>O64094</accession>
<name>AIMR_BPSPB</name>
<reference key="1">
    <citation type="journal article" date="1998" name="Proc. Natl. Acad. Sci. U.S.A.">
        <title>Introns and intein coding sequence in the ribonucleotide reductase genes of Bacillus subtilis temperate bacteriophage SPbeta.</title>
        <authorList>
            <person name="Lazarevic V."/>
            <person name="Soldo B."/>
            <person name="Duesterhoeft A."/>
            <person name="Hilbert H."/>
            <person name="Maueel C."/>
            <person name="Karamata D."/>
        </authorList>
    </citation>
    <scope>NUCLEOTIDE SEQUENCE [GENOMIC DNA]</scope>
</reference>
<dbReference type="EMBL" id="AF020713">
    <property type="protein sequence ID" value="AAC13054.1"/>
    <property type="molecule type" value="Genomic_DNA"/>
</dbReference>
<dbReference type="PIR" id="T12845">
    <property type="entry name" value="T12845"/>
</dbReference>
<dbReference type="RefSeq" id="NP_046633.1">
    <property type="nucleotide sequence ID" value="NC_001884.1"/>
</dbReference>
<dbReference type="PDB" id="5XYB">
    <property type="method" value="X-ray"/>
    <property type="resolution" value="2.20 A"/>
    <property type="chains" value="A/B=1-386"/>
</dbReference>
<dbReference type="PDB" id="5Y24">
    <property type="method" value="X-ray"/>
    <property type="resolution" value="1.92 A"/>
    <property type="chains" value="A/B=1-386"/>
</dbReference>
<dbReference type="PDB" id="5ZW5">
    <property type="method" value="X-ray"/>
    <property type="resolution" value="2.40 A"/>
    <property type="chains" value="A/B=1-386"/>
</dbReference>
<dbReference type="PDB" id="5ZW6">
    <property type="method" value="X-ray"/>
    <property type="resolution" value="2.05 A"/>
    <property type="chains" value="A/B=1-386"/>
</dbReference>
<dbReference type="PDB" id="6IM4">
    <property type="method" value="X-ray"/>
    <property type="resolution" value="1.93 A"/>
    <property type="chains" value="A/B=1-386"/>
</dbReference>
<dbReference type="PDB" id="6IPX">
    <property type="method" value="X-ray"/>
    <property type="resolution" value="2.63 A"/>
    <property type="chains" value="A/B=1-386"/>
</dbReference>
<dbReference type="PDB" id="6JG5">
    <property type="method" value="X-ray"/>
    <property type="resolution" value="2.22 A"/>
    <property type="chains" value="A/B=1-386"/>
</dbReference>
<dbReference type="PDB" id="6JG8">
    <property type="method" value="X-ray"/>
    <property type="resolution" value="2.10 A"/>
    <property type="chains" value="A/B=1-386"/>
</dbReference>
<dbReference type="PDB" id="6JG9">
    <property type="method" value="X-ray"/>
    <property type="resolution" value="2.00 A"/>
    <property type="chains" value="A/B=1-386"/>
</dbReference>
<dbReference type="PDBsum" id="5XYB"/>
<dbReference type="PDBsum" id="5Y24"/>
<dbReference type="PDBsum" id="5ZW5"/>
<dbReference type="PDBsum" id="5ZW6"/>
<dbReference type="PDBsum" id="6IM4"/>
<dbReference type="PDBsum" id="6IPX"/>
<dbReference type="PDBsum" id="6JG5"/>
<dbReference type="PDBsum" id="6JG8"/>
<dbReference type="PDBsum" id="6JG9"/>
<dbReference type="SMR" id="O64094"/>
<dbReference type="GeneID" id="1261404"/>
<dbReference type="KEGG" id="vg:1261404"/>
<dbReference type="Proteomes" id="UP000009091">
    <property type="component" value="Genome"/>
</dbReference>
<dbReference type="GO" id="GO:0098689">
    <property type="term" value="P:latency-replication decision"/>
    <property type="evidence" value="ECO:0007669"/>
    <property type="project" value="UniProtKB-KW"/>
</dbReference>
<dbReference type="InterPro" id="IPR047705">
    <property type="entry name" value="AimR-like"/>
</dbReference>
<dbReference type="NCBIfam" id="NF038310">
    <property type="entry name" value="lysogeny_AimR"/>
    <property type="match status" value="1"/>
</dbReference>
<dbReference type="Pfam" id="PF22871">
    <property type="entry name" value="AimR"/>
    <property type="match status" value="1"/>
</dbReference>
<organism>
    <name type="scientific">Bacillus phage SPbeta</name>
    <name type="common">Bacillus phage SPBc2</name>
    <name type="synonym">Bacteriophage SP-beta</name>
    <dbReference type="NCBI Taxonomy" id="2932878"/>
    <lineage>
        <taxon>Viruses</taxon>
        <taxon>Duplodnaviria</taxon>
        <taxon>Heunggongvirae</taxon>
        <taxon>Uroviricota</taxon>
        <taxon>Caudoviricetes</taxon>
        <taxon>Spbetavirus</taxon>
        <taxon>Spbetavirus SPbeta</taxon>
    </lineage>
</organism>